<name>GLPK_PARD8</name>
<feature type="chain" id="PRO_1000058455" description="Glycerol kinase">
    <location>
        <begin position="1"/>
        <end position="499"/>
    </location>
</feature>
<feature type="binding site" evidence="1">
    <location>
        <position position="15"/>
    </location>
    <ligand>
        <name>ADP</name>
        <dbReference type="ChEBI" id="CHEBI:456216"/>
    </ligand>
</feature>
<feature type="binding site" evidence="1">
    <location>
        <position position="15"/>
    </location>
    <ligand>
        <name>ATP</name>
        <dbReference type="ChEBI" id="CHEBI:30616"/>
    </ligand>
</feature>
<feature type="binding site" evidence="1">
    <location>
        <position position="15"/>
    </location>
    <ligand>
        <name>sn-glycerol 3-phosphate</name>
        <dbReference type="ChEBI" id="CHEBI:57597"/>
    </ligand>
</feature>
<feature type="binding site" evidence="1">
    <location>
        <position position="16"/>
    </location>
    <ligand>
        <name>ATP</name>
        <dbReference type="ChEBI" id="CHEBI:30616"/>
    </ligand>
</feature>
<feature type="binding site" evidence="1">
    <location>
        <position position="17"/>
    </location>
    <ligand>
        <name>ATP</name>
        <dbReference type="ChEBI" id="CHEBI:30616"/>
    </ligand>
</feature>
<feature type="binding site" evidence="1">
    <location>
        <position position="19"/>
    </location>
    <ligand>
        <name>ADP</name>
        <dbReference type="ChEBI" id="CHEBI:456216"/>
    </ligand>
</feature>
<feature type="binding site" evidence="1">
    <location>
        <position position="85"/>
    </location>
    <ligand>
        <name>glycerol</name>
        <dbReference type="ChEBI" id="CHEBI:17754"/>
    </ligand>
</feature>
<feature type="binding site" evidence="1">
    <location>
        <position position="85"/>
    </location>
    <ligand>
        <name>sn-glycerol 3-phosphate</name>
        <dbReference type="ChEBI" id="CHEBI:57597"/>
    </ligand>
</feature>
<feature type="binding site" evidence="1">
    <location>
        <position position="86"/>
    </location>
    <ligand>
        <name>glycerol</name>
        <dbReference type="ChEBI" id="CHEBI:17754"/>
    </ligand>
</feature>
<feature type="binding site" evidence="1">
    <location>
        <position position="86"/>
    </location>
    <ligand>
        <name>sn-glycerol 3-phosphate</name>
        <dbReference type="ChEBI" id="CHEBI:57597"/>
    </ligand>
</feature>
<feature type="binding site" evidence="1">
    <location>
        <position position="137"/>
    </location>
    <ligand>
        <name>glycerol</name>
        <dbReference type="ChEBI" id="CHEBI:17754"/>
    </ligand>
</feature>
<feature type="binding site" evidence="1">
    <location>
        <position position="137"/>
    </location>
    <ligand>
        <name>sn-glycerol 3-phosphate</name>
        <dbReference type="ChEBI" id="CHEBI:57597"/>
    </ligand>
</feature>
<feature type="binding site" evidence="1">
    <location>
        <position position="246"/>
    </location>
    <ligand>
        <name>glycerol</name>
        <dbReference type="ChEBI" id="CHEBI:17754"/>
    </ligand>
</feature>
<feature type="binding site" evidence="1">
    <location>
        <position position="246"/>
    </location>
    <ligand>
        <name>sn-glycerol 3-phosphate</name>
        <dbReference type="ChEBI" id="CHEBI:57597"/>
    </ligand>
</feature>
<feature type="binding site" evidence="1">
    <location>
        <position position="247"/>
    </location>
    <ligand>
        <name>glycerol</name>
        <dbReference type="ChEBI" id="CHEBI:17754"/>
    </ligand>
</feature>
<feature type="binding site" evidence="1">
    <location>
        <position position="268"/>
    </location>
    <ligand>
        <name>ADP</name>
        <dbReference type="ChEBI" id="CHEBI:456216"/>
    </ligand>
</feature>
<feature type="binding site" evidence="1">
    <location>
        <position position="268"/>
    </location>
    <ligand>
        <name>ATP</name>
        <dbReference type="ChEBI" id="CHEBI:30616"/>
    </ligand>
</feature>
<feature type="binding site" evidence="1">
    <location>
        <position position="311"/>
    </location>
    <ligand>
        <name>ADP</name>
        <dbReference type="ChEBI" id="CHEBI:456216"/>
    </ligand>
</feature>
<feature type="binding site" evidence="1">
    <location>
        <position position="311"/>
    </location>
    <ligand>
        <name>ATP</name>
        <dbReference type="ChEBI" id="CHEBI:30616"/>
    </ligand>
</feature>
<feature type="binding site" evidence="1">
    <location>
        <position position="315"/>
    </location>
    <ligand>
        <name>ATP</name>
        <dbReference type="ChEBI" id="CHEBI:30616"/>
    </ligand>
</feature>
<feature type="binding site" evidence="1">
    <location>
        <position position="412"/>
    </location>
    <ligand>
        <name>ADP</name>
        <dbReference type="ChEBI" id="CHEBI:456216"/>
    </ligand>
</feature>
<feature type="binding site" evidence="1">
    <location>
        <position position="412"/>
    </location>
    <ligand>
        <name>ATP</name>
        <dbReference type="ChEBI" id="CHEBI:30616"/>
    </ligand>
</feature>
<feature type="binding site" evidence="1">
    <location>
        <position position="416"/>
    </location>
    <ligand>
        <name>ADP</name>
        <dbReference type="ChEBI" id="CHEBI:456216"/>
    </ligand>
</feature>
<evidence type="ECO:0000255" key="1">
    <source>
        <dbReference type="HAMAP-Rule" id="MF_00186"/>
    </source>
</evidence>
<reference key="1">
    <citation type="journal article" date="2007" name="PLoS Biol.">
        <title>Evolution of symbiotic bacteria in the distal human intestine.</title>
        <authorList>
            <person name="Xu J."/>
            <person name="Mahowald M.A."/>
            <person name="Ley R.E."/>
            <person name="Lozupone C.A."/>
            <person name="Hamady M."/>
            <person name="Martens E.C."/>
            <person name="Henrissat B."/>
            <person name="Coutinho P.M."/>
            <person name="Minx P."/>
            <person name="Latreille P."/>
            <person name="Cordum H."/>
            <person name="Van Brunt A."/>
            <person name="Kim K."/>
            <person name="Fulton R.S."/>
            <person name="Fulton L.A."/>
            <person name="Clifton S.W."/>
            <person name="Wilson R.K."/>
            <person name="Knight R.D."/>
            <person name="Gordon J.I."/>
        </authorList>
    </citation>
    <scope>NUCLEOTIDE SEQUENCE [LARGE SCALE GENOMIC DNA]</scope>
    <source>
        <strain>ATCC 8503 / DSM 20701 / CIP 104284 / JCM 5825 / NCTC 11152</strain>
    </source>
</reference>
<comment type="function">
    <text evidence="1">Key enzyme in the regulation of glycerol uptake and metabolism. Catalyzes the phosphorylation of glycerol to yield sn-glycerol 3-phosphate.</text>
</comment>
<comment type="catalytic activity">
    <reaction evidence="1">
        <text>glycerol + ATP = sn-glycerol 3-phosphate + ADP + H(+)</text>
        <dbReference type="Rhea" id="RHEA:21644"/>
        <dbReference type="ChEBI" id="CHEBI:15378"/>
        <dbReference type="ChEBI" id="CHEBI:17754"/>
        <dbReference type="ChEBI" id="CHEBI:30616"/>
        <dbReference type="ChEBI" id="CHEBI:57597"/>
        <dbReference type="ChEBI" id="CHEBI:456216"/>
        <dbReference type="EC" id="2.7.1.30"/>
    </reaction>
</comment>
<comment type="activity regulation">
    <text evidence="1">Inhibited by fructose 1,6-bisphosphate (FBP).</text>
</comment>
<comment type="pathway">
    <text evidence="1">Polyol metabolism; glycerol degradation via glycerol kinase pathway; sn-glycerol 3-phosphate from glycerol: step 1/1.</text>
</comment>
<comment type="similarity">
    <text evidence="1">Belongs to the FGGY kinase family.</text>
</comment>
<proteinExistence type="inferred from homology"/>
<protein>
    <recommendedName>
        <fullName evidence="1">Glycerol kinase</fullName>
        <ecNumber evidence="1">2.7.1.30</ecNumber>
    </recommendedName>
    <alternativeName>
        <fullName evidence="1">ATP:glycerol 3-phosphotransferase</fullName>
    </alternativeName>
    <alternativeName>
        <fullName evidence="1">Glycerokinase</fullName>
        <shortName evidence="1">GK</shortName>
    </alternativeName>
</protein>
<gene>
    <name evidence="1" type="primary">glpK</name>
    <name type="ordered locus">BDI_1816</name>
</gene>
<organism>
    <name type="scientific">Parabacteroides distasonis (strain ATCC 8503 / DSM 20701 / CIP 104284 / JCM 5825 / NCTC 11152)</name>
    <dbReference type="NCBI Taxonomy" id="435591"/>
    <lineage>
        <taxon>Bacteria</taxon>
        <taxon>Pseudomonadati</taxon>
        <taxon>Bacteroidota</taxon>
        <taxon>Bacteroidia</taxon>
        <taxon>Bacteroidales</taxon>
        <taxon>Tannerellaceae</taxon>
        <taxon>Parabacteroides</taxon>
    </lineage>
</organism>
<sequence>MNFRNKYVLAIDQGTTSSRAILFNHQGTIITLAQKPFQQYFPKPGWVEHDPNEIWYTQSSVIKEAMAKADVTDSHIACIGIANQRETTIIWDRETGFPVYNAIVWQDRRTADYCEELKSQGWAERILQKTGLVIDAYFSATKIKWILDNVKGIRERAERGELCFGTVDTWLVWKLTRGAQFITDVTNASRTMLFNIRTLQWDQELLDLFTIPASMLPQVKACSEVYCETSTPIFKKGIPVSGMAGDQQAALFGQLCVEDGMIKTTYGTGCFMILNTGKEPVLSQNNLLTTIAWKLGDQTTYALEGSVFVGGAVVQWLRDGIGLIPNASITEQMAKSVSDNGGVYFVPALTGLGAPYWDQYARGAIIGITRGTTAAHLTRAALEGICYQVYDVLMAMENDIHAKPKEIRVDGGAIANNFLMQFQSDICRCPVVRPNVLETTALGAAYLAGLAIGYWKDIDELKEQWCLDKVFNPQMKEDTARKLLNEWHKAVGRSQNWAE</sequence>
<dbReference type="EC" id="2.7.1.30" evidence="1"/>
<dbReference type="EMBL" id="CP000140">
    <property type="protein sequence ID" value="ABR43555.1"/>
    <property type="molecule type" value="Genomic_DNA"/>
</dbReference>
<dbReference type="RefSeq" id="WP_005855008.1">
    <property type="nucleotide sequence ID" value="NZ_LR215978.1"/>
</dbReference>
<dbReference type="SMR" id="A6LCZ1"/>
<dbReference type="STRING" id="435591.BDI_1816"/>
<dbReference type="PaxDb" id="435591-BDI_1816"/>
<dbReference type="KEGG" id="pdi:BDI_1816"/>
<dbReference type="eggNOG" id="COG0554">
    <property type="taxonomic scope" value="Bacteria"/>
</dbReference>
<dbReference type="HOGENOM" id="CLU_009281_2_3_10"/>
<dbReference type="BioCyc" id="PDIS435591:G1G5A-1868-MONOMER"/>
<dbReference type="UniPathway" id="UPA00618">
    <property type="reaction ID" value="UER00672"/>
</dbReference>
<dbReference type="Proteomes" id="UP000000566">
    <property type="component" value="Chromosome"/>
</dbReference>
<dbReference type="GO" id="GO:0005829">
    <property type="term" value="C:cytosol"/>
    <property type="evidence" value="ECO:0007669"/>
    <property type="project" value="TreeGrafter"/>
</dbReference>
<dbReference type="GO" id="GO:0005524">
    <property type="term" value="F:ATP binding"/>
    <property type="evidence" value="ECO:0007669"/>
    <property type="project" value="UniProtKB-UniRule"/>
</dbReference>
<dbReference type="GO" id="GO:0004370">
    <property type="term" value="F:glycerol kinase activity"/>
    <property type="evidence" value="ECO:0000250"/>
    <property type="project" value="UniProtKB"/>
</dbReference>
<dbReference type="GO" id="GO:0019563">
    <property type="term" value="P:glycerol catabolic process"/>
    <property type="evidence" value="ECO:0007669"/>
    <property type="project" value="UniProtKB-UniRule"/>
</dbReference>
<dbReference type="GO" id="GO:0006071">
    <property type="term" value="P:glycerol metabolic process"/>
    <property type="evidence" value="ECO:0000250"/>
    <property type="project" value="UniProtKB"/>
</dbReference>
<dbReference type="GO" id="GO:0006072">
    <property type="term" value="P:glycerol-3-phosphate metabolic process"/>
    <property type="evidence" value="ECO:0007669"/>
    <property type="project" value="InterPro"/>
</dbReference>
<dbReference type="CDD" id="cd07786">
    <property type="entry name" value="FGGY_EcGK_like"/>
    <property type="match status" value="1"/>
</dbReference>
<dbReference type="FunFam" id="3.30.420.40:FF:000007">
    <property type="entry name" value="Glycerol kinase"/>
    <property type="match status" value="1"/>
</dbReference>
<dbReference type="FunFam" id="3.30.420.40:FF:000008">
    <property type="entry name" value="Glycerol kinase"/>
    <property type="match status" value="1"/>
</dbReference>
<dbReference type="Gene3D" id="3.30.420.40">
    <property type="match status" value="2"/>
</dbReference>
<dbReference type="HAMAP" id="MF_00186">
    <property type="entry name" value="Glycerol_kin"/>
    <property type="match status" value="1"/>
</dbReference>
<dbReference type="InterPro" id="IPR043129">
    <property type="entry name" value="ATPase_NBD"/>
</dbReference>
<dbReference type="InterPro" id="IPR000577">
    <property type="entry name" value="Carb_kinase_FGGY"/>
</dbReference>
<dbReference type="InterPro" id="IPR018483">
    <property type="entry name" value="Carb_kinase_FGGY_CS"/>
</dbReference>
<dbReference type="InterPro" id="IPR018485">
    <property type="entry name" value="FGGY_C"/>
</dbReference>
<dbReference type="InterPro" id="IPR018484">
    <property type="entry name" value="FGGY_N"/>
</dbReference>
<dbReference type="InterPro" id="IPR005999">
    <property type="entry name" value="Glycerol_kin"/>
</dbReference>
<dbReference type="NCBIfam" id="TIGR01311">
    <property type="entry name" value="glycerol_kin"/>
    <property type="match status" value="1"/>
</dbReference>
<dbReference type="NCBIfam" id="NF000756">
    <property type="entry name" value="PRK00047.1"/>
    <property type="match status" value="1"/>
</dbReference>
<dbReference type="PANTHER" id="PTHR10196:SF69">
    <property type="entry name" value="GLYCEROL KINASE"/>
    <property type="match status" value="1"/>
</dbReference>
<dbReference type="PANTHER" id="PTHR10196">
    <property type="entry name" value="SUGAR KINASE"/>
    <property type="match status" value="1"/>
</dbReference>
<dbReference type="Pfam" id="PF02782">
    <property type="entry name" value="FGGY_C"/>
    <property type="match status" value="1"/>
</dbReference>
<dbReference type="Pfam" id="PF00370">
    <property type="entry name" value="FGGY_N"/>
    <property type="match status" value="1"/>
</dbReference>
<dbReference type="PIRSF" id="PIRSF000538">
    <property type="entry name" value="GlpK"/>
    <property type="match status" value="1"/>
</dbReference>
<dbReference type="SUPFAM" id="SSF53067">
    <property type="entry name" value="Actin-like ATPase domain"/>
    <property type="match status" value="2"/>
</dbReference>
<dbReference type="PROSITE" id="PS00933">
    <property type="entry name" value="FGGY_KINASES_1"/>
    <property type="match status" value="1"/>
</dbReference>
<dbReference type="PROSITE" id="PS00445">
    <property type="entry name" value="FGGY_KINASES_2"/>
    <property type="match status" value="1"/>
</dbReference>
<accession>A6LCZ1</accession>
<keyword id="KW-0067">ATP-binding</keyword>
<keyword id="KW-0319">Glycerol metabolism</keyword>
<keyword id="KW-0418">Kinase</keyword>
<keyword id="KW-0547">Nucleotide-binding</keyword>
<keyword id="KW-1185">Reference proteome</keyword>
<keyword id="KW-0808">Transferase</keyword>